<keyword id="KW-0002">3D-structure</keyword>
<keyword id="KW-0007">Acetylation</keyword>
<keyword id="KW-0025">Alternative splicing</keyword>
<keyword id="KW-0963">Cytoplasm</keyword>
<keyword id="KW-1017">Isopeptide bond</keyword>
<keyword id="KW-0507">mRNA processing</keyword>
<keyword id="KW-0508">mRNA splicing</keyword>
<keyword id="KW-0509">mRNA transport</keyword>
<keyword id="KW-0866">Nonsense-mediated mRNA decay</keyword>
<keyword id="KW-0539">Nucleus</keyword>
<keyword id="KW-0597">Phosphoprotein</keyword>
<keyword id="KW-1267">Proteomics identification</keyword>
<keyword id="KW-1185">Reference proteome</keyword>
<keyword id="KW-0694">RNA-binding</keyword>
<keyword id="KW-0747">Spliceosome</keyword>
<keyword id="KW-0810">Translation regulation</keyword>
<keyword id="KW-0813">Transport</keyword>
<keyword id="KW-0832">Ubl conjugation</keyword>
<feature type="initiator methionine" description="Removed" evidence="50 52 53">
    <location>
        <position position="1"/>
    </location>
</feature>
<feature type="chain" id="PRO_0000081763" description="RNA-binding protein 8A">
    <location>
        <begin position="2"/>
        <end position="174"/>
    </location>
</feature>
<feature type="domain" description="RRM" evidence="1">
    <location>
        <begin position="73"/>
        <end position="151"/>
    </location>
</feature>
<feature type="region of interest" description="Disordered" evidence="2">
    <location>
        <begin position="1"/>
        <end position="70"/>
    </location>
</feature>
<feature type="region of interest" description="Disordered" evidence="2">
    <location>
        <begin position="151"/>
        <end position="174"/>
    </location>
</feature>
<feature type="compositionally biased region" description="Basic and acidic residues" evidence="2">
    <location>
        <begin position="1"/>
        <end position="11"/>
    </location>
</feature>
<feature type="compositionally biased region" description="Basic residues" evidence="2">
    <location>
        <begin position="28"/>
        <end position="38"/>
    </location>
</feature>
<feature type="compositionally biased region" description="Basic and acidic residues" evidence="2">
    <location>
        <begin position="44"/>
        <end position="54"/>
    </location>
</feature>
<feature type="compositionally biased region" description="Basic residues" evidence="2">
    <location>
        <begin position="155"/>
        <end position="174"/>
    </location>
</feature>
<feature type="modified residue" description="N-acetylalanine" evidence="50 52 53">
    <location>
        <position position="2"/>
    </location>
</feature>
<feature type="modified residue" description="Phosphoserine" evidence="52 53 54">
    <location>
        <position position="24"/>
    </location>
</feature>
<feature type="modified residue" description="Phosphoserine" evidence="48 49 52 53 54">
    <location>
        <position position="42"/>
    </location>
</feature>
<feature type="modified residue" description="Phosphoserine" evidence="49 51 53 54">
    <location>
        <position position="56"/>
    </location>
</feature>
<feature type="cross-link" description="Glycyl lysine isopeptide (Lys-Gly) (interchain with G-Cter in SUMO2)" evidence="55 56">
    <location>
        <position position="27"/>
    </location>
</feature>
<feature type="splice variant" id="VSP_005810" description="In isoform 2." evidence="35 36">
    <location>
        <position position="44"/>
    </location>
</feature>
<feature type="mutagenesis site" description="Impaired nonsense-mediated decay activity." evidence="20">
    <original>EE</original>
    <variation>RR</variation>
    <location>
        <begin position="82"/>
        <end position="83"/>
    </location>
</feature>
<feature type="mutagenesis site" description="Complete loss of nonsense-mediated decay activity." evidence="20">
    <original>LDR</original>
    <variation>RDE</variation>
    <location>
        <begin position="106"/>
        <end position="108"/>
    </location>
</feature>
<feature type="mutagenesis site" description="Complete loss of nonsense-mediated decay activity." evidence="20">
    <original>L</original>
    <variation>R</variation>
    <location>
        <position position="118"/>
    </location>
</feature>
<feature type="mutagenesis site" description="Complete loss of nonsense-mediated decay activity." evidence="20">
    <original>CF</original>
    <variation>KA</variation>
    <location>
        <begin position="149"/>
        <end position="150"/>
    </location>
</feature>
<feature type="sequence conflict" description="In Ref. 8; CAG46622." evidence="38" ref="8">
    <original>A</original>
    <variation>V</variation>
    <location>
        <position position="130"/>
    </location>
</feature>
<feature type="strand" evidence="57">
    <location>
        <begin position="72"/>
        <end position="78"/>
    </location>
</feature>
<feature type="helix" evidence="57">
    <location>
        <begin position="86"/>
        <end position="93"/>
    </location>
</feature>
<feature type="helix" evidence="57">
    <location>
        <begin position="94"/>
        <end position="96"/>
    </location>
</feature>
<feature type="strand" evidence="57">
    <location>
        <begin position="99"/>
        <end position="106"/>
    </location>
</feature>
<feature type="turn" evidence="57">
    <location>
        <begin position="108"/>
        <end position="110"/>
    </location>
</feature>
<feature type="strand" evidence="57">
    <location>
        <begin position="111"/>
        <end position="122"/>
    </location>
</feature>
<feature type="helix" evidence="57">
    <location>
        <begin position="124"/>
        <end position="134"/>
    </location>
</feature>
<feature type="strand" evidence="57">
    <location>
        <begin position="138"/>
        <end position="143"/>
    </location>
</feature>
<feature type="strand" evidence="57">
    <location>
        <begin position="145"/>
        <end position="153"/>
    </location>
</feature>
<proteinExistence type="evidence at protein level"/>
<organism>
    <name type="scientific">Homo sapiens</name>
    <name type="common">Human</name>
    <dbReference type="NCBI Taxonomy" id="9606"/>
    <lineage>
        <taxon>Eukaryota</taxon>
        <taxon>Metazoa</taxon>
        <taxon>Chordata</taxon>
        <taxon>Craniata</taxon>
        <taxon>Vertebrata</taxon>
        <taxon>Euteleostomi</taxon>
        <taxon>Mammalia</taxon>
        <taxon>Eutheria</taxon>
        <taxon>Euarchontoglires</taxon>
        <taxon>Primates</taxon>
        <taxon>Haplorrhini</taxon>
        <taxon>Catarrhini</taxon>
        <taxon>Hominidae</taxon>
        <taxon>Homo</taxon>
    </lineage>
</organism>
<accession>Q9Y5S9</accession>
<accession>B3KQI9</accession>
<accession>Q6FHD1</accession>
<accession>Q6IQ40</accession>
<accession>Q9GZX8</accession>
<accession>Q9NZI4</accession>
<evidence type="ECO:0000255" key="1">
    <source>
        <dbReference type="PROSITE-ProRule" id="PRU00176"/>
    </source>
</evidence>
<evidence type="ECO:0000256" key="2">
    <source>
        <dbReference type="SAM" id="MobiDB-lite"/>
    </source>
</evidence>
<evidence type="ECO:0000269" key="3">
    <source>
    </source>
</evidence>
<evidence type="ECO:0000269" key="4">
    <source>
    </source>
</evidence>
<evidence type="ECO:0000269" key="5">
    <source>
    </source>
</evidence>
<evidence type="ECO:0000269" key="6">
    <source>
    </source>
</evidence>
<evidence type="ECO:0000269" key="7">
    <source>
    </source>
</evidence>
<evidence type="ECO:0000269" key="8">
    <source>
    </source>
</evidence>
<evidence type="ECO:0000269" key="9">
    <source>
    </source>
</evidence>
<evidence type="ECO:0000269" key="10">
    <source>
    </source>
</evidence>
<evidence type="ECO:0000269" key="11">
    <source>
    </source>
</evidence>
<evidence type="ECO:0000269" key="12">
    <source>
    </source>
</evidence>
<evidence type="ECO:0000269" key="13">
    <source>
    </source>
</evidence>
<evidence type="ECO:0000269" key="14">
    <source>
    </source>
</evidence>
<evidence type="ECO:0000269" key="15">
    <source>
    </source>
</evidence>
<evidence type="ECO:0000269" key="16">
    <source>
    </source>
</evidence>
<evidence type="ECO:0000269" key="17">
    <source>
    </source>
</evidence>
<evidence type="ECO:0000269" key="18">
    <source>
    </source>
</evidence>
<evidence type="ECO:0000269" key="19">
    <source>
    </source>
</evidence>
<evidence type="ECO:0000269" key="20">
    <source>
    </source>
</evidence>
<evidence type="ECO:0000269" key="21">
    <source>
    </source>
</evidence>
<evidence type="ECO:0000269" key="22">
    <source>
    </source>
</evidence>
<evidence type="ECO:0000269" key="23">
    <source>
    </source>
</evidence>
<evidence type="ECO:0000269" key="24">
    <source>
    </source>
</evidence>
<evidence type="ECO:0000269" key="25">
    <source>
    </source>
</evidence>
<evidence type="ECO:0000269" key="26">
    <source>
    </source>
</evidence>
<evidence type="ECO:0000269" key="27">
    <source>
    </source>
</evidence>
<evidence type="ECO:0000269" key="28">
    <source>
    </source>
</evidence>
<evidence type="ECO:0000269" key="29">
    <source>
    </source>
</evidence>
<evidence type="ECO:0000269" key="30">
    <source>
    </source>
</evidence>
<evidence type="ECO:0000269" key="31">
    <source>
    </source>
</evidence>
<evidence type="ECO:0000269" key="32">
    <source>
    </source>
</evidence>
<evidence type="ECO:0000269" key="33">
    <source>
    </source>
</evidence>
<evidence type="ECO:0000269" key="34">
    <source>
    </source>
</evidence>
<evidence type="ECO:0000303" key="35">
    <source>
    </source>
</evidence>
<evidence type="ECO:0000303" key="36">
    <source>
    </source>
</evidence>
<evidence type="ECO:0000303" key="37">
    <source>
    </source>
</evidence>
<evidence type="ECO:0000305" key="38"/>
<evidence type="ECO:0007744" key="39">
    <source>
        <dbReference type="PDB" id="1P27"/>
    </source>
</evidence>
<evidence type="ECO:0007744" key="40">
    <source>
        <dbReference type="PDB" id="2HYI"/>
    </source>
</evidence>
<evidence type="ECO:0007744" key="41">
    <source>
        <dbReference type="PDB" id="2J0Q"/>
    </source>
</evidence>
<evidence type="ECO:0007744" key="42">
    <source>
        <dbReference type="PDB" id="2J0S"/>
    </source>
</evidence>
<evidence type="ECO:0007744" key="43">
    <source>
        <dbReference type="PDB" id="2XB2"/>
    </source>
</evidence>
<evidence type="ECO:0007744" key="44">
    <source>
        <dbReference type="PDB" id="3EX7"/>
    </source>
</evidence>
<evidence type="ECO:0007744" key="45">
    <source>
        <dbReference type="PDB" id="5XJC"/>
    </source>
</evidence>
<evidence type="ECO:0007744" key="46">
    <source>
        <dbReference type="PDB" id="5YZG"/>
    </source>
</evidence>
<evidence type="ECO:0007744" key="47">
    <source>
        <dbReference type="PDB" id="7ZNJ"/>
    </source>
</evidence>
<evidence type="ECO:0007744" key="48">
    <source>
    </source>
</evidence>
<evidence type="ECO:0007744" key="49">
    <source>
    </source>
</evidence>
<evidence type="ECO:0007744" key="50">
    <source>
    </source>
</evidence>
<evidence type="ECO:0007744" key="51">
    <source>
    </source>
</evidence>
<evidence type="ECO:0007744" key="52">
    <source>
    </source>
</evidence>
<evidence type="ECO:0007744" key="53">
    <source>
    </source>
</evidence>
<evidence type="ECO:0007744" key="54">
    <source>
    </source>
</evidence>
<evidence type="ECO:0007744" key="55">
    <source>
    </source>
</evidence>
<evidence type="ECO:0007744" key="56">
    <source>
    </source>
</evidence>
<evidence type="ECO:0007829" key="57">
    <source>
        <dbReference type="PDB" id="1P27"/>
    </source>
</evidence>
<gene>
    <name type="primary">RBM8A</name>
    <name type="synonym">RBM8</name>
    <name type="ORF">HSPC114</name>
    <name type="ORF">MDS014</name>
</gene>
<comment type="function">
    <text evidence="12 13 14 20 27 30 33 34">Required for pre-mRNA splicing as component of the spliceosome (PubMed:28502770, PubMed:29301961). Core component of the splicing-dependent multiprotein exon junction complex (EJC) deposited at splice junctions on mRNAs. The EJC is a dynamic structure consisting of core proteins and several peripheral nuclear and cytoplasmic associated factors that join the complex only transiently either during EJC assembly or during subsequent mRNA metabolism. The EJC marks the position of the exon-exon junction in the mature mRNA for the gene expression machinery and the core components remain bound to spliced mRNAs throughout all stages of mRNA metabolism thereby influencing downstream processes including nuclear mRNA export, subcellular mRNA localization, translation efficiency and nonsense-mediated mRNA decay (NMD). The MAGOH-RBM8A heterodimer inhibits the ATPase activity of EIF4A3, thereby trapping the ATP-bound EJC core onto spliced mRNA in a stable conformation. The MAGOH-RBM8A heterodimer interacts with the EJC key regulator PYM1 leading to EJC disassembly in the cytoplasm and translation enhancement of EJC-bearing spliced mRNAs by recruiting them to the ribosomal 48S preinitiation complex. Its removal from cytoplasmic mRNAs requires translation initiation from EJC-bearing spliced mRNAs. Associates preferentially with mRNAs produced by splicing. Does not interact with pre-mRNAs, introns, or mRNAs produced from intronless cDNAs. Associates with both nuclear mRNAs and newly exported cytoplasmic mRNAs. The MAGOH-RBM8A heterodimer is a component of the nonsense mediated decay (NMD) pathway. Involved in the splicing modulation of BCL2L1/Bcl-X (and probably other apoptotic genes); specifically inhibits formation of proapoptotic isoforms such as Bcl-X(S); the function is different from the established EJC assembly.</text>
</comment>
<comment type="subunit">
    <text evidence="3 4 6 7 8 9 10 11 12 13 14 15 16 17 18 19 21 22 23 24 25 28 29 32 33 34">Heterodimer with either MAGOH or MAGOHB (PubMed:10662555, PubMed:12730685, PubMed:12781131, PubMed:23917022). Part of the mRNA splicing-dependent exon junction complex (EJC) complex; the core complex contains CASC3, EIF4A3, MAGOH or MAGOHB, and RBM8A (PubMed:11707413, PubMed:16170325, PubMed:16314458, PubMed:16923391, PubMed:16931718, PubMed:19033377, PubMed:20479275, PubMed:23917022). Component of the ALYREF/THOC4-EJC-RNA complex; in the complex interacts with EIF4A3 and MAGOH; these interactions are likely specific to RNA-bound EJC (PubMed:16314458, PubMed:37020021). Interacts with PYM1; the interaction is direct and dissociates the EJC from spliced mRNAs (PubMed:14968132, PubMed:18026120, PubMed:19410547). Part of a complex that contains the EJC core components CASC3, EIF4A3, MAGOH and RBM8A plus proteins involved in nonsense-mediated mRNA decay, such as UPF1, UPF2, UPF3A and UPF3B (PubMed:11546873, PubMed:12718880, PubMed:20479275). Found in a post-splicing complex with NXF1, MAGOH, UPF1, UPF2, UPF3A, UPF3B and RNPS1 (PubMed:11546874). Interacts with DDX39B, MAGOH, DPH1, UPF3B, RNPS1, SRRM1 and ALYREF/THOC4 (PubMed:11013075, PubMed:11118221, PubMed:11707413, PubMed:12944400). Interacts with IPO13; the interaction mediates the nuclear import of the MAGOH-RBM8A heterodimer (PubMed:11447110). Identified in the spliceosome C complex (PubMed:11991638, PubMed:28502770, PubMed:29301961). Associates with polysomes (PubMed:12121612).</text>
</comment>
<comment type="interaction">
    <interactant intactId="EBI-447231">
        <id>Q9Y5S9</id>
    </interactant>
    <interactant intactId="EBI-299104">
        <id>P38919</id>
        <label>EIF4A3</label>
    </interactant>
    <organismsDiffer>false</organismsDiffer>
    <experiments>22</experiments>
</comment>
<comment type="interaction">
    <interactant intactId="EBI-447231">
        <id>Q9Y5S9</id>
    </interactant>
    <interactant intactId="EBI-299134">
        <id>P61326</id>
        <label>MAGOH</label>
    </interactant>
    <organismsDiffer>false</organismsDiffer>
    <experiments>43</experiments>
</comment>
<comment type="interaction">
    <interactant intactId="EBI-447231">
        <id>Q9Y5S9</id>
    </interactant>
    <interactant intactId="EBI-746778">
        <id>Q96A72</id>
        <label>MAGOHB</label>
    </interactant>
    <organismsDiffer>false</organismsDiffer>
    <experiments>13</experiments>
</comment>
<comment type="interaction">
    <interactant intactId="EBI-447231">
        <id>Q9Y5S9</id>
    </interactant>
    <interactant intactId="EBI-539478">
        <id>Q96SB4</id>
        <label>SRPK1</label>
    </interactant>
    <organismsDiffer>false</organismsDiffer>
    <experiments>3</experiments>
</comment>
<comment type="interaction">
    <interactant intactId="EBI-447231">
        <id>Q9Y5S9</id>
    </interactant>
    <interactant intactId="EBI-593303">
        <id>P78362</id>
        <label>SRPK2</label>
    </interactant>
    <organismsDiffer>false</organismsDiffer>
    <experiments>2</experiments>
</comment>
<comment type="interaction">
    <interactant intactId="EBI-447231">
        <id>Q9Y5S9</id>
    </interactant>
    <interactant intactId="EBI-11952764">
        <id>Q99081-3</id>
        <label>TCF12</label>
    </interactant>
    <organismsDiffer>false</organismsDiffer>
    <experiments>3</experiments>
</comment>
<comment type="interaction">
    <interactant intactId="EBI-447231">
        <id>Q9Y5S9</id>
    </interactant>
    <interactant intactId="EBI-352039">
        <id>Q9Y2W1</id>
        <label>THRAP3</label>
    </interactant>
    <organismsDiffer>false</organismsDiffer>
    <experiments>2</experiments>
</comment>
<comment type="interaction">
    <interactant intactId="EBI-447231">
        <id>Q9Y5S9</id>
    </interactant>
    <interactant intactId="EBI-521530">
        <id>Q9H1J1</id>
        <label>UPF3A</label>
    </interactant>
    <organismsDiffer>false</organismsDiffer>
    <experiments>4</experiments>
</comment>
<comment type="interaction">
    <interactant intactId="EBI-447231">
        <id>Q9Y5S9</id>
    </interactant>
    <interactant intactId="EBI-372780">
        <id>Q9BZI7</id>
        <label>UPF3B</label>
    </interactant>
    <organismsDiffer>false</organismsDiffer>
    <experiments>9</experiments>
</comment>
<comment type="interaction">
    <interactant intactId="EBI-5773674">
        <id>Q9Y5S9-1</id>
    </interactant>
    <interactant intactId="EBI-299134">
        <id>P61326</id>
        <label>MAGOH</label>
    </interactant>
    <organismsDiffer>false</organismsDiffer>
    <experiments>7</experiments>
</comment>
<comment type="subcellular location">
    <subcellularLocation>
        <location evidence="5 26 33 34">Nucleus</location>
    </subcellularLocation>
    <subcellularLocation>
        <location evidence="5 26">Nucleus speckle</location>
    </subcellularLocation>
    <subcellularLocation>
        <location evidence="5 26">Cytoplasm</location>
    </subcellularLocation>
    <text evidence="5 26">Nucleocytoplasmic shuttling protein (PubMed:11030346). Travels to the cytoplasm as part of the exon junction complex (EJC) bound to mRNA. Colocalizes with the core EJC, ALYREF/THOC4, NXF1 and UAP56 in the nucleus and nuclear speckles (PubMed:19324961).</text>
</comment>
<comment type="alternative products">
    <event type="alternative splicing"/>
    <isoform>
        <id>Q9Y5S9-1</id>
        <name>1</name>
        <name>BOV-1a</name>
        <sequence type="displayed"/>
    </isoform>
    <isoform>
        <id>Q9Y5S9-2</id>
        <name>2</name>
        <name>BOV-1b</name>
        <sequence type="described" ref="VSP_005810"/>
    </isoform>
</comment>
<comment type="tissue specificity">
    <text>Ubiquitous.</text>
</comment>
<comment type="disease" evidence="31">
    <disease id="DI-04993">
        <name>Thrombocytopenia-absent radius syndrome</name>
        <acronym>TAR</acronym>
        <description>An autosomal recessive disorder characterized by bilateral absence of the radii with the presence of both thumbs, thrombocytopenia, low numbers of megakaryocytes, and bleeding episodes in the first year of life. Thrombocytopenic episodes decrease with age. Skeletal anomalies range from absence of radii to virtual absence of upper limbs, with or without lower limb defects such as malformations of the hip and knee.</description>
        <dbReference type="MIM" id="274000"/>
    </disease>
    <text>The disease is caused by variants affecting the gene represented in this entry.</text>
</comment>
<comment type="similarity">
    <text evidence="38">Belongs to the RBM8A family.</text>
</comment>
<comment type="sequence caution" evidence="38">
    <conflict type="erroneous initiation">
        <sequence resource="EMBL-CDS" id="AAG14951"/>
    </conflict>
</comment>
<comment type="sequence caution" evidence="38">
    <conflict type="erroneous initiation">
        <sequence resource="EMBL-CDS" id="AAG16782"/>
    </conflict>
</comment>
<comment type="sequence caution" evidence="38">
    <conflict type="miscellaneous discrepancy">
        <sequence resource="EMBL-CDS" id="AAG16782"/>
    </conflict>
    <text>Chimeric cDNA. A chimeric cDNA originating from chromosomes 1 and 5.</text>
</comment>
<name>RBM8A_HUMAN</name>
<dbReference type="EMBL" id="AF127761">
    <property type="protein sequence ID" value="AAD21089.1"/>
    <property type="molecule type" value="mRNA"/>
</dbReference>
<dbReference type="EMBL" id="AF198620">
    <property type="protein sequence ID" value="AAF37551.1"/>
    <property type="molecule type" value="mRNA"/>
</dbReference>
<dbReference type="EMBL" id="AF231511">
    <property type="protein sequence ID" value="AAG16781.1"/>
    <property type="molecule type" value="mRNA"/>
</dbReference>
<dbReference type="EMBL" id="AF231512">
    <property type="protein sequence ID" value="AAG16782.1"/>
    <property type="status" value="ALT_INIT"/>
    <property type="molecule type" value="mRNA"/>
</dbReference>
<dbReference type="EMBL" id="AF299118">
    <property type="protein sequence ID" value="AAG27091.1"/>
    <property type="molecule type" value="mRNA"/>
</dbReference>
<dbReference type="EMBL" id="AF403012">
    <property type="protein sequence ID" value="AAL26999.1"/>
    <property type="molecule type" value="Genomic_DNA"/>
</dbReference>
<dbReference type="EMBL" id="AF182415">
    <property type="protein sequence ID" value="AAG14951.1"/>
    <property type="status" value="ALT_INIT"/>
    <property type="molecule type" value="mRNA"/>
</dbReference>
<dbReference type="EMBL" id="AF161463">
    <property type="protein sequence ID" value="AAF29078.1"/>
    <property type="molecule type" value="mRNA"/>
</dbReference>
<dbReference type="EMBL" id="CR541823">
    <property type="protein sequence ID" value="CAG46622.1"/>
    <property type="molecule type" value="mRNA"/>
</dbReference>
<dbReference type="EMBL" id="CR541805">
    <property type="protein sequence ID" value="CAG46604.1"/>
    <property type="molecule type" value="mRNA"/>
</dbReference>
<dbReference type="EMBL" id="AK075009">
    <property type="protein sequence ID" value="BAG52051.1"/>
    <property type="molecule type" value="mRNA"/>
</dbReference>
<dbReference type="EMBL" id="AL160282">
    <property type="status" value="NOT_ANNOTATED_CDS"/>
    <property type="molecule type" value="Genomic_DNA"/>
</dbReference>
<dbReference type="EMBL" id="CH471244">
    <property type="protein sequence ID" value="EAW71419.1"/>
    <property type="molecule type" value="Genomic_DNA"/>
</dbReference>
<dbReference type="EMBL" id="BC017088">
    <property type="protein sequence ID" value="AAH17088.1"/>
    <property type="molecule type" value="mRNA"/>
</dbReference>
<dbReference type="CCDS" id="CCDS72872.1">
    <molecule id="Q9Y5S9-1"/>
</dbReference>
<dbReference type="RefSeq" id="NP_005096.1">
    <molecule id="Q9Y5S9-1"/>
    <property type="nucleotide sequence ID" value="NM_005105.5"/>
</dbReference>
<dbReference type="PDB" id="1P27">
    <property type="method" value="X-ray"/>
    <property type="resolution" value="2.00 A"/>
    <property type="chains" value="B/D=50-155"/>
</dbReference>
<dbReference type="PDB" id="2HYI">
    <property type="method" value="X-ray"/>
    <property type="resolution" value="2.30 A"/>
    <property type="chains" value="B/H=64-154"/>
</dbReference>
<dbReference type="PDB" id="2J0Q">
    <property type="method" value="X-ray"/>
    <property type="resolution" value="3.20 A"/>
    <property type="chains" value="D/G=66-174"/>
</dbReference>
<dbReference type="PDB" id="2J0S">
    <property type="method" value="X-ray"/>
    <property type="resolution" value="2.21 A"/>
    <property type="chains" value="D=66-154"/>
</dbReference>
<dbReference type="PDB" id="2XB2">
    <property type="method" value="X-ray"/>
    <property type="resolution" value="3.40 A"/>
    <property type="chains" value="D/Z=66-155"/>
</dbReference>
<dbReference type="PDB" id="3EX7">
    <property type="method" value="X-ray"/>
    <property type="resolution" value="2.30 A"/>
    <property type="chains" value="B/G=51-174"/>
</dbReference>
<dbReference type="PDB" id="5XJC">
    <property type="method" value="EM"/>
    <property type="resolution" value="3.60 A"/>
    <property type="chains" value="w=1-174"/>
</dbReference>
<dbReference type="PDB" id="5YZG">
    <property type="method" value="EM"/>
    <property type="resolution" value="4.10 A"/>
    <property type="chains" value="w=1-174"/>
</dbReference>
<dbReference type="PDB" id="6ICZ">
    <property type="method" value="EM"/>
    <property type="resolution" value="3.00 A"/>
    <property type="chains" value="w=1-174"/>
</dbReference>
<dbReference type="PDB" id="6QDV">
    <property type="method" value="EM"/>
    <property type="resolution" value="3.30 A"/>
    <property type="chains" value="8=64-150"/>
</dbReference>
<dbReference type="PDB" id="7A5P">
    <property type="method" value="EM"/>
    <property type="resolution" value="5.00 A"/>
    <property type="chains" value="w=1-174"/>
</dbReference>
<dbReference type="PDB" id="7W59">
    <property type="method" value="EM"/>
    <property type="resolution" value="3.60 A"/>
    <property type="chains" value="w=1-174"/>
</dbReference>
<dbReference type="PDB" id="7W5A">
    <property type="method" value="EM"/>
    <property type="resolution" value="3.60 A"/>
    <property type="chains" value="w=1-174"/>
</dbReference>
<dbReference type="PDB" id="7W5B">
    <property type="method" value="EM"/>
    <property type="resolution" value="4.30 A"/>
    <property type="chains" value="w=1-174"/>
</dbReference>
<dbReference type="PDB" id="7ZNJ">
    <property type="method" value="EM"/>
    <property type="resolution" value="2.40 A"/>
    <property type="chains" value="C/H/M/c/h/m=65-155"/>
</dbReference>
<dbReference type="PDB" id="8C6J">
    <property type="method" value="EM"/>
    <property type="resolution" value="2.80 A"/>
    <property type="chains" value="8=1-174"/>
</dbReference>
<dbReference type="PDB" id="8I0W">
    <property type="method" value="EM"/>
    <property type="resolution" value="3.40 A"/>
    <property type="chains" value="w=1-174"/>
</dbReference>
<dbReference type="PDB" id="9FMD">
    <property type="method" value="EM"/>
    <property type="resolution" value="3.30 A"/>
    <property type="chains" value="8=1-174"/>
</dbReference>
<dbReference type="PDBsum" id="1P27"/>
<dbReference type="PDBsum" id="2HYI"/>
<dbReference type="PDBsum" id="2J0Q"/>
<dbReference type="PDBsum" id="2J0S"/>
<dbReference type="PDBsum" id="2XB2"/>
<dbReference type="PDBsum" id="3EX7"/>
<dbReference type="PDBsum" id="5XJC"/>
<dbReference type="PDBsum" id="5YZG"/>
<dbReference type="PDBsum" id="6ICZ"/>
<dbReference type="PDBsum" id="6QDV"/>
<dbReference type="PDBsum" id="7A5P"/>
<dbReference type="PDBsum" id="7W59"/>
<dbReference type="PDBsum" id="7W5A"/>
<dbReference type="PDBsum" id="7W5B"/>
<dbReference type="PDBsum" id="7ZNJ"/>
<dbReference type="PDBsum" id="8C6J"/>
<dbReference type="PDBsum" id="8I0W"/>
<dbReference type="PDBsum" id="9FMD"/>
<dbReference type="EMDB" id="EMD-14803"/>
<dbReference type="EMDB" id="EMD-16452"/>
<dbReference type="EMDB" id="EMD-32317"/>
<dbReference type="EMDB" id="EMD-32319"/>
<dbReference type="EMDB" id="EMD-32321"/>
<dbReference type="EMDB" id="EMD-35113"/>
<dbReference type="EMDB" id="EMD-4525"/>
<dbReference type="EMDB" id="EMD-6721"/>
<dbReference type="EMDB" id="EMD-6864"/>
<dbReference type="EMDB" id="EMD-9645"/>
<dbReference type="SMR" id="Q9Y5S9"/>
<dbReference type="BioGRID" id="115265">
    <property type="interactions" value="451"/>
</dbReference>
<dbReference type="ComplexPortal" id="CPX-1941">
    <property type="entry name" value="Exon junction core complex, MAGOH variant"/>
</dbReference>
<dbReference type="ComplexPortal" id="CPX-1942">
    <property type="entry name" value="Exon junction subcomplex MAGOH-Y14"/>
</dbReference>
<dbReference type="ComplexPortal" id="CPX-680">
    <property type="entry name" value="Exon junction subcomplex MAGOHB-Y14"/>
</dbReference>
<dbReference type="ComplexPortal" id="CPX-682">
    <property type="entry name" value="Exon junction core complex, MAGOHB variant"/>
</dbReference>
<dbReference type="ComplexPortal" id="CPX-9481">
    <property type="entry name" value="ALYREF-binding exon junction complex"/>
</dbReference>
<dbReference type="CORUM" id="Q9Y5S9"/>
<dbReference type="DIP" id="DIP-33070N"/>
<dbReference type="FunCoup" id="Q9Y5S9">
    <property type="interactions" value="4487"/>
</dbReference>
<dbReference type="IntAct" id="Q9Y5S9">
    <property type="interactions" value="325"/>
</dbReference>
<dbReference type="MINT" id="Q9Y5S9"/>
<dbReference type="STRING" id="9606.ENSP00000463058"/>
<dbReference type="TCDB" id="3.A.18.1.1">
    <property type="family name" value="the nuclear mrna exporter (mrna-e) family"/>
</dbReference>
<dbReference type="GlyGen" id="Q9Y5S9">
    <property type="glycosylation" value="1 site, 1 O-linked glycan (1 site)"/>
</dbReference>
<dbReference type="iPTMnet" id="Q9Y5S9"/>
<dbReference type="MetOSite" id="Q9Y5S9"/>
<dbReference type="PhosphoSitePlus" id="Q9Y5S9"/>
<dbReference type="SwissPalm" id="Q9Y5S9"/>
<dbReference type="BioMuta" id="RBM8A"/>
<dbReference type="DMDM" id="10720244"/>
<dbReference type="jPOST" id="Q9Y5S9"/>
<dbReference type="MassIVE" id="Q9Y5S9"/>
<dbReference type="PaxDb" id="9606-ENSP00000463058"/>
<dbReference type="PeptideAtlas" id="Q9Y5S9"/>
<dbReference type="ProteomicsDB" id="86494">
    <molecule id="Q9Y5S9-1"/>
</dbReference>
<dbReference type="ProteomicsDB" id="86495">
    <molecule id="Q9Y5S9-2"/>
</dbReference>
<dbReference type="Pumba" id="Q9Y5S9"/>
<dbReference type="Antibodypedia" id="74773">
    <property type="antibodies" value="154 antibodies from 30 providers"/>
</dbReference>
<dbReference type="DNASU" id="9939"/>
<dbReference type="Ensembl" id="ENST00000369307.4">
    <molecule id="Q9Y5S9-2"/>
    <property type="protein sequence ID" value="ENSP00000358313.3"/>
    <property type="gene ID" value="ENSG00000265241.8"/>
</dbReference>
<dbReference type="Ensembl" id="ENST00000583313.7">
    <molecule id="Q9Y5S9-1"/>
    <property type="protein sequence ID" value="ENSP00000463058.2"/>
    <property type="gene ID" value="ENSG00000265241.8"/>
</dbReference>
<dbReference type="Ensembl" id="ENST00000632555.1">
    <molecule id="Q9Y5S9-1"/>
    <property type="protein sequence ID" value="ENSP00000488265.1"/>
    <property type="gene ID" value="ENSG00000265241.8"/>
</dbReference>
<dbReference type="Ensembl" id="ENST00000691760.1">
    <molecule id="Q9Y5S9-1"/>
    <property type="protein sequence ID" value="ENSP00000510519.1"/>
    <property type="gene ID" value="ENSG00000265241.8"/>
</dbReference>
<dbReference type="GeneID" id="9939"/>
<dbReference type="KEGG" id="hsa:9939"/>
<dbReference type="MANE-Select" id="ENST00000583313.7">
    <property type="protein sequence ID" value="ENSP00000463058.2"/>
    <property type="RefSeq nucleotide sequence ID" value="NM_005105.5"/>
    <property type="RefSeq protein sequence ID" value="NP_005096.1"/>
</dbReference>
<dbReference type="UCSC" id="uc031uto.2">
    <molecule id="Q9Y5S9-1"/>
    <property type="organism name" value="human"/>
</dbReference>
<dbReference type="AGR" id="HGNC:9905"/>
<dbReference type="CTD" id="9939"/>
<dbReference type="DisGeNET" id="9939"/>
<dbReference type="GeneCards" id="RBM8A"/>
<dbReference type="GeneReviews" id="RBM8A"/>
<dbReference type="HGNC" id="HGNC:9905">
    <property type="gene designation" value="RBM8A"/>
</dbReference>
<dbReference type="HPA" id="ENSG00000265241">
    <property type="expression patterns" value="Low tissue specificity"/>
</dbReference>
<dbReference type="MalaCards" id="RBM8A"/>
<dbReference type="MIM" id="274000">
    <property type="type" value="phenotype"/>
</dbReference>
<dbReference type="MIM" id="605313">
    <property type="type" value="gene"/>
</dbReference>
<dbReference type="neXtProt" id="NX_Q9Y5S9"/>
<dbReference type="OpenTargets" id="ENSG00000265241"/>
<dbReference type="Orphanet" id="3320">
    <property type="disease" value="Thrombocytopenia-absent radius syndrome"/>
</dbReference>
<dbReference type="PharmGKB" id="PA34270"/>
<dbReference type="VEuPathDB" id="HostDB:ENSG00000265241"/>
<dbReference type="eggNOG" id="KOG0130">
    <property type="taxonomic scope" value="Eukaryota"/>
</dbReference>
<dbReference type="GeneTree" id="ENSGT00730000111185"/>
<dbReference type="InParanoid" id="Q9Y5S9"/>
<dbReference type="OMA" id="IYNHEEF"/>
<dbReference type="OrthoDB" id="15688at2759"/>
<dbReference type="PAN-GO" id="Q9Y5S9">
    <property type="GO annotations" value="3 GO annotations based on evolutionary models"/>
</dbReference>
<dbReference type="PhylomeDB" id="Q9Y5S9"/>
<dbReference type="TreeFam" id="TF314933"/>
<dbReference type="PathwayCommons" id="Q9Y5S9"/>
<dbReference type="Reactome" id="R-HSA-159236">
    <property type="pathway name" value="Transport of Mature mRNA derived from an Intron-Containing Transcript"/>
</dbReference>
<dbReference type="Reactome" id="R-HSA-72163">
    <property type="pathway name" value="mRNA Splicing - Major Pathway"/>
</dbReference>
<dbReference type="Reactome" id="R-HSA-72187">
    <property type="pathway name" value="mRNA 3'-end processing"/>
</dbReference>
<dbReference type="Reactome" id="R-HSA-73856">
    <property type="pathway name" value="RNA Polymerase II Transcription Termination"/>
</dbReference>
<dbReference type="Reactome" id="R-HSA-9010553">
    <property type="pathway name" value="Regulation of expression of SLITs and ROBOs"/>
</dbReference>
<dbReference type="Reactome" id="R-HSA-975957">
    <property type="pathway name" value="Nonsense Mediated Decay (NMD) enhanced by the Exon Junction Complex (EJC)"/>
</dbReference>
<dbReference type="SignaLink" id="Q9Y5S9"/>
<dbReference type="SIGNOR" id="Q9Y5S9"/>
<dbReference type="BioGRID-ORCS" id="9939">
    <property type="hits" value="680 hits in 1116 CRISPR screens"/>
</dbReference>
<dbReference type="CD-CODE" id="232F8A39">
    <property type="entry name" value="P-body"/>
</dbReference>
<dbReference type="CD-CODE" id="91857CE7">
    <property type="entry name" value="Nucleolus"/>
</dbReference>
<dbReference type="ChiTaRS" id="RBM8A">
    <property type="organism name" value="human"/>
</dbReference>
<dbReference type="EvolutionaryTrace" id="Q9Y5S9"/>
<dbReference type="GeneWiki" id="RBM8A"/>
<dbReference type="GenomeRNAi" id="9939"/>
<dbReference type="Pharos" id="Q9Y5S9">
    <property type="development level" value="Tbio"/>
</dbReference>
<dbReference type="PRO" id="PR:Q9Y5S9"/>
<dbReference type="Proteomes" id="UP000005640">
    <property type="component" value="Chromosome 1"/>
</dbReference>
<dbReference type="RNAct" id="Q9Y5S9">
    <property type="molecule type" value="protein"/>
</dbReference>
<dbReference type="Bgee" id="ENSG00000265241">
    <property type="expression patterns" value="Expressed in ganglionic eminence and 210 other cell types or tissues"/>
</dbReference>
<dbReference type="ExpressionAtlas" id="Q9Y5S9">
    <property type="expression patterns" value="baseline and differential"/>
</dbReference>
<dbReference type="GO" id="GO:0071013">
    <property type="term" value="C:catalytic step 2 spliceosome"/>
    <property type="evidence" value="ECO:0000314"/>
    <property type="project" value="UniProtKB"/>
</dbReference>
<dbReference type="GO" id="GO:0005737">
    <property type="term" value="C:cytoplasm"/>
    <property type="evidence" value="ECO:0000303"/>
    <property type="project" value="UniProtKB"/>
</dbReference>
<dbReference type="GO" id="GO:0005829">
    <property type="term" value="C:cytosol"/>
    <property type="evidence" value="ECO:0000304"/>
    <property type="project" value="Reactome"/>
</dbReference>
<dbReference type="GO" id="GO:0030425">
    <property type="term" value="C:dendrite"/>
    <property type="evidence" value="ECO:0007669"/>
    <property type="project" value="Ensembl"/>
</dbReference>
<dbReference type="GO" id="GO:0035145">
    <property type="term" value="C:exon-exon junction complex"/>
    <property type="evidence" value="ECO:0000314"/>
    <property type="project" value="UniProtKB"/>
</dbReference>
<dbReference type="GO" id="GO:1990501">
    <property type="term" value="C:exon-exon junction subcomplex mago-y14"/>
    <property type="evidence" value="ECO:0000353"/>
    <property type="project" value="ComplexPortal"/>
</dbReference>
<dbReference type="GO" id="GO:0043025">
    <property type="term" value="C:neuronal cell body"/>
    <property type="evidence" value="ECO:0007669"/>
    <property type="project" value="Ensembl"/>
</dbReference>
<dbReference type="GO" id="GO:0016607">
    <property type="term" value="C:nuclear speck"/>
    <property type="evidence" value="ECO:0000314"/>
    <property type="project" value="HPA"/>
</dbReference>
<dbReference type="GO" id="GO:0005654">
    <property type="term" value="C:nucleoplasm"/>
    <property type="evidence" value="ECO:0000304"/>
    <property type="project" value="Reactome"/>
</dbReference>
<dbReference type="GO" id="GO:0005634">
    <property type="term" value="C:nucleus"/>
    <property type="evidence" value="ECO:0000314"/>
    <property type="project" value="UniProtKB"/>
</dbReference>
<dbReference type="GO" id="GO:0071006">
    <property type="term" value="C:U2-type catalytic step 1 spliceosome"/>
    <property type="evidence" value="ECO:0000314"/>
    <property type="project" value="UniProtKB"/>
</dbReference>
<dbReference type="GO" id="GO:0003729">
    <property type="term" value="F:mRNA binding"/>
    <property type="evidence" value="ECO:0000318"/>
    <property type="project" value="GO_Central"/>
</dbReference>
<dbReference type="GO" id="GO:0003723">
    <property type="term" value="F:RNA binding"/>
    <property type="evidence" value="ECO:0007005"/>
    <property type="project" value="UniProtKB"/>
</dbReference>
<dbReference type="GO" id="GO:0006406">
    <property type="term" value="P:mRNA export from nucleus"/>
    <property type="evidence" value="ECO:0000303"/>
    <property type="project" value="ComplexPortal"/>
</dbReference>
<dbReference type="GO" id="GO:0000398">
    <property type="term" value="P:mRNA splicing, via spliceosome"/>
    <property type="evidence" value="ECO:0000314"/>
    <property type="project" value="UniProtKB"/>
</dbReference>
<dbReference type="GO" id="GO:0000184">
    <property type="term" value="P:nuclear-transcribed mRNA catabolic process, nonsense-mediated decay"/>
    <property type="evidence" value="ECO:0000315"/>
    <property type="project" value="UniProtKB"/>
</dbReference>
<dbReference type="GO" id="GO:0000381">
    <property type="term" value="P:regulation of alternative mRNA splicing, via spliceosome"/>
    <property type="evidence" value="ECO:0000315"/>
    <property type="project" value="UniProtKB"/>
</dbReference>
<dbReference type="GO" id="GO:0050684">
    <property type="term" value="P:regulation of mRNA processing"/>
    <property type="evidence" value="ECO:0000314"/>
    <property type="project" value="ComplexPortal"/>
</dbReference>
<dbReference type="GO" id="GO:2000622">
    <property type="term" value="P:regulation of nuclear-transcribed mRNA catabolic process, nonsense-mediated decay"/>
    <property type="evidence" value="ECO:0000314"/>
    <property type="project" value="ComplexPortal"/>
</dbReference>
<dbReference type="GO" id="GO:0006417">
    <property type="term" value="P:regulation of translation"/>
    <property type="evidence" value="ECO:0007669"/>
    <property type="project" value="UniProtKB-KW"/>
</dbReference>
<dbReference type="GO" id="GO:0008380">
    <property type="term" value="P:RNA splicing"/>
    <property type="evidence" value="ECO:0000318"/>
    <property type="project" value="GO_Central"/>
</dbReference>
<dbReference type="CDD" id="cd12324">
    <property type="entry name" value="RRM_RBM8"/>
    <property type="match status" value="1"/>
</dbReference>
<dbReference type="DisProt" id="DP02868"/>
<dbReference type="FunFam" id="3.30.70.330:FF:000157">
    <property type="entry name" value="RNA-binding protein 8A"/>
    <property type="match status" value="1"/>
</dbReference>
<dbReference type="Gene3D" id="3.30.70.330">
    <property type="match status" value="1"/>
</dbReference>
<dbReference type="InterPro" id="IPR012677">
    <property type="entry name" value="Nucleotide-bd_a/b_plait_sf"/>
</dbReference>
<dbReference type="InterPro" id="IPR035979">
    <property type="entry name" value="RBD_domain_sf"/>
</dbReference>
<dbReference type="InterPro" id="IPR008111">
    <property type="entry name" value="RNA-bd_8"/>
</dbReference>
<dbReference type="InterPro" id="IPR000504">
    <property type="entry name" value="RRM_dom"/>
</dbReference>
<dbReference type="InterPro" id="IPR033744">
    <property type="entry name" value="RRM_RBM8"/>
</dbReference>
<dbReference type="PANTHER" id="PTHR45894">
    <property type="entry name" value="RNA-BINDING PROTEIN 8A"/>
    <property type="match status" value="1"/>
</dbReference>
<dbReference type="Pfam" id="PF00076">
    <property type="entry name" value="RRM_1"/>
    <property type="match status" value="1"/>
</dbReference>
<dbReference type="PRINTS" id="PR01738">
    <property type="entry name" value="RNABINDINGM8"/>
</dbReference>
<dbReference type="SMART" id="SM00360">
    <property type="entry name" value="RRM"/>
    <property type="match status" value="1"/>
</dbReference>
<dbReference type="SUPFAM" id="SSF54928">
    <property type="entry name" value="RNA-binding domain, RBD"/>
    <property type="match status" value="1"/>
</dbReference>
<dbReference type="PROSITE" id="PS50102">
    <property type="entry name" value="RRM"/>
    <property type="match status" value="1"/>
</dbReference>
<reference key="1">
    <citation type="journal article" date="2000" name="Biochim. Biophys. Acta">
        <title>Cloning and gene expression of a novel human ribonucleoprotein.</title>
        <authorList>
            <person name="Conklin D.C."/>
            <person name="Rixon M.W."/>
            <person name="Kuestner R.E."/>
            <person name="Maurer M.F."/>
            <person name="Whitmore T.E."/>
            <person name="Millar R.P."/>
        </authorList>
    </citation>
    <scope>NUCLEOTIDE SEQUENCE [MRNA] (ISOFORM 1)</scope>
    <source>
        <tissue>Skeletal muscle</tissue>
    </source>
</reference>
<reference key="2">
    <citation type="journal article" date="2000" name="Genomics">
        <title>MAGOH interacts with a novel RNA-binding protein.</title>
        <authorList>
            <person name="Zhao X.F."/>
            <person name="Nowak N.J."/>
            <person name="Shows T.B."/>
            <person name="Aplan P.D."/>
        </authorList>
    </citation>
    <scope>NUCLEOTIDE SEQUENCE [MRNA] (ISOFORM 2)</scope>
    <scope>INTERACTION WITH MAGOH</scope>
</reference>
<reference key="3">
    <citation type="journal article" date="2000" name="Genomics">
        <title>Identification and structural analysis of human RBM8A and RBM8B: two highly conserved RNA-binding motif proteins that interact with OVCA1, a candidate tumor suppressor.</title>
        <authorList>
            <person name="Salicioni A.M."/>
            <person name="Xi M."/>
            <person name="Vanderveer L.A."/>
            <person name="Balsara B."/>
            <person name="Testa J.R."/>
            <person name="Dunbrack R.L. Jr."/>
            <person name="Godwin A.K."/>
        </authorList>
    </citation>
    <scope>NUCLEOTIDE SEQUENCE [MRNA] (ISOFORMS 1 AND 2)</scope>
    <scope>INTERACTION WITH DPH1</scope>
    <source>
        <tissue>Brain</tissue>
    </source>
</reference>
<reference key="4">
    <citation type="journal article" date="2000" name="Mol. Cell">
        <title>Pre-mRNA splicing imprints mRNA in the nucleus with a novel RNA-binding protein that persists in the cytoplasm.</title>
        <authorList>
            <person name="Kataoka N."/>
            <person name="Yong J."/>
            <person name="Kim V.N."/>
            <person name="Velazquez F."/>
            <person name="Perkinson R.A."/>
            <person name="Wang F."/>
            <person name="Dreyfuss G."/>
        </authorList>
    </citation>
    <scope>NUCLEOTIDE SEQUENCE [MRNA] (ISOFORM 1)</scope>
    <scope>RNA-BINDING</scope>
    <scope>SUBCELLULAR LOCATION</scope>
</reference>
<reference key="5">
    <citation type="journal article" date="2001" name="Genomics">
        <title>The genes encoding the type II gonadotropin-releasing hormone receptor and the ribonucleoprotein RBM8A in humans overlap in two genomic loci.</title>
        <authorList>
            <person name="Faurholm B."/>
            <person name="Millar R.P."/>
            <person name="Katz A.A."/>
        </authorList>
    </citation>
    <scope>NUCLEOTIDE SEQUENCE [GENOMIC DNA]</scope>
</reference>
<reference key="6">
    <citation type="submission" date="1999-09" db="EMBL/GenBank/DDBJ databases">
        <title>Novel genes expressed in hematopoietic stem/progenitor cells from myelodysplastic syndrome patients.</title>
        <authorList>
            <person name="Huang C."/>
            <person name="Qian B."/>
            <person name="Tu Y."/>
            <person name="Gu W."/>
            <person name="Wang Y."/>
            <person name="Han Z."/>
            <person name="Chen Z."/>
        </authorList>
    </citation>
    <scope>NUCLEOTIDE SEQUENCE [LARGE SCALE MRNA] (ISOFORM 1)</scope>
    <source>
        <tissue>Hematopoietic stem cell</tissue>
    </source>
</reference>
<reference key="7">
    <citation type="journal article" date="2000" name="Genome Res.">
        <title>Cloning and functional analysis of cDNAs with open reading frames for 300 previously undefined genes expressed in CD34+ hematopoietic stem/progenitor cells.</title>
        <authorList>
            <person name="Zhang Q.-H."/>
            <person name="Ye M."/>
            <person name="Wu X.-Y."/>
            <person name="Ren S.-X."/>
            <person name="Zhao M."/>
            <person name="Zhao C.-J."/>
            <person name="Fu G."/>
            <person name="Shen Y."/>
            <person name="Fan H.-Y."/>
            <person name="Lu G."/>
            <person name="Zhong M."/>
            <person name="Xu X.-R."/>
            <person name="Han Z.-G."/>
            <person name="Zhang J.-W."/>
            <person name="Tao J."/>
            <person name="Huang Q.-H."/>
            <person name="Zhou J."/>
            <person name="Hu G.-X."/>
            <person name="Gu J."/>
            <person name="Chen S.-J."/>
            <person name="Chen Z."/>
        </authorList>
    </citation>
    <scope>NUCLEOTIDE SEQUENCE [LARGE SCALE MRNA] (ISOFORM 1)</scope>
    <source>
        <tissue>Umbilical cord blood</tissue>
    </source>
</reference>
<reference key="8">
    <citation type="submission" date="2004-06" db="EMBL/GenBank/DDBJ databases">
        <title>Cloning of human full open reading frames in Gateway(TM) system entry vector (pDONR201).</title>
        <authorList>
            <person name="Halleck A."/>
            <person name="Ebert L."/>
            <person name="Mkoundinya M."/>
            <person name="Schick M."/>
            <person name="Eisenstein S."/>
            <person name="Neubert P."/>
            <person name="Kstrang K."/>
            <person name="Schatten R."/>
            <person name="Shen B."/>
            <person name="Henze S."/>
            <person name="Mar W."/>
            <person name="Korn B."/>
            <person name="Zuo D."/>
            <person name="Hu Y."/>
            <person name="LaBaer J."/>
        </authorList>
    </citation>
    <scope>NUCLEOTIDE SEQUENCE [LARGE SCALE MRNA] (ISOFORM 1)</scope>
</reference>
<reference key="9">
    <citation type="journal article" date="2005" name="DNA Res.">
        <title>Signal sequence and keyword trap in silico for selection of full-length human cDNAs encoding secretion or membrane proteins from oligo-capped cDNA libraries.</title>
        <authorList>
            <person name="Otsuki T."/>
            <person name="Ota T."/>
            <person name="Nishikawa T."/>
            <person name="Hayashi K."/>
            <person name="Suzuki Y."/>
            <person name="Yamamoto J."/>
            <person name="Wakamatsu A."/>
            <person name="Kimura K."/>
            <person name="Sakamoto K."/>
            <person name="Hatano N."/>
            <person name="Kawai Y."/>
            <person name="Ishii S."/>
            <person name="Saito K."/>
            <person name="Kojima S."/>
            <person name="Sugiyama T."/>
            <person name="Ono T."/>
            <person name="Okano K."/>
            <person name="Yoshikawa Y."/>
            <person name="Aotsuka S."/>
            <person name="Sasaki N."/>
            <person name="Hattori A."/>
            <person name="Okumura K."/>
            <person name="Nagai K."/>
            <person name="Sugano S."/>
            <person name="Isogai T."/>
        </authorList>
    </citation>
    <scope>NUCLEOTIDE SEQUENCE [LARGE SCALE MRNA] (ISOFORM 1)</scope>
    <source>
        <tissue>Teratocarcinoma</tissue>
    </source>
</reference>
<reference key="10">
    <citation type="journal article" date="2006" name="Nature">
        <title>The DNA sequence and biological annotation of human chromosome 1.</title>
        <authorList>
            <person name="Gregory S.G."/>
            <person name="Barlow K.F."/>
            <person name="McLay K.E."/>
            <person name="Kaul R."/>
            <person name="Swarbreck D."/>
            <person name="Dunham A."/>
            <person name="Scott C.E."/>
            <person name="Howe K.L."/>
            <person name="Woodfine K."/>
            <person name="Spencer C.C.A."/>
            <person name="Jones M.C."/>
            <person name="Gillson C."/>
            <person name="Searle S."/>
            <person name="Zhou Y."/>
            <person name="Kokocinski F."/>
            <person name="McDonald L."/>
            <person name="Evans R."/>
            <person name="Phillips K."/>
            <person name="Atkinson A."/>
            <person name="Cooper R."/>
            <person name="Jones C."/>
            <person name="Hall R.E."/>
            <person name="Andrews T.D."/>
            <person name="Lloyd C."/>
            <person name="Ainscough R."/>
            <person name="Almeida J.P."/>
            <person name="Ambrose K.D."/>
            <person name="Anderson F."/>
            <person name="Andrew R.W."/>
            <person name="Ashwell R.I.S."/>
            <person name="Aubin K."/>
            <person name="Babbage A.K."/>
            <person name="Bagguley C.L."/>
            <person name="Bailey J."/>
            <person name="Beasley H."/>
            <person name="Bethel G."/>
            <person name="Bird C.P."/>
            <person name="Bray-Allen S."/>
            <person name="Brown J.Y."/>
            <person name="Brown A.J."/>
            <person name="Buckley D."/>
            <person name="Burton J."/>
            <person name="Bye J."/>
            <person name="Carder C."/>
            <person name="Chapman J.C."/>
            <person name="Clark S.Y."/>
            <person name="Clarke G."/>
            <person name="Clee C."/>
            <person name="Cobley V."/>
            <person name="Collier R.E."/>
            <person name="Corby N."/>
            <person name="Coville G.J."/>
            <person name="Davies J."/>
            <person name="Deadman R."/>
            <person name="Dunn M."/>
            <person name="Earthrowl M."/>
            <person name="Ellington A.G."/>
            <person name="Errington H."/>
            <person name="Frankish A."/>
            <person name="Frankland J."/>
            <person name="French L."/>
            <person name="Garner P."/>
            <person name="Garnett J."/>
            <person name="Gay L."/>
            <person name="Ghori M.R.J."/>
            <person name="Gibson R."/>
            <person name="Gilby L.M."/>
            <person name="Gillett W."/>
            <person name="Glithero R.J."/>
            <person name="Grafham D.V."/>
            <person name="Griffiths C."/>
            <person name="Griffiths-Jones S."/>
            <person name="Grocock R."/>
            <person name="Hammond S."/>
            <person name="Harrison E.S.I."/>
            <person name="Hart E."/>
            <person name="Haugen E."/>
            <person name="Heath P.D."/>
            <person name="Holmes S."/>
            <person name="Holt K."/>
            <person name="Howden P.J."/>
            <person name="Hunt A.R."/>
            <person name="Hunt S.E."/>
            <person name="Hunter G."/>
            <person name="Isherwood J."/>
            <person name="James R."/>
            <person name="Johnson C."/>
            <person name="Johnson D."/>
            <person name="Joy A."/>
            <person name="Kay M."/>
            <person name="Kershaw J.K."/>
            <person name="Kibukawa M."/>
            <person name="Kimberley A.M."/>
            <person name="King A."/>
            <person name="Knights A.J."/>
            <person name="Lad H."/>
            <person name="Laird G."/>
            <person name="Lawlor S."/>
            <person name="Leongamornlert D.A."/>
            <person name="Lloyd D.M."/>
            <person name="Loveland J."/>
            <person name="Lovell J."/>
            <person name="Lush M.J."/>
            <person name="Lyne R."/>
            <person name="Martin S."/>
            <person name="Mashreghi-Mohammadi M."/>
            <person name="Matthews L."/>
            <person name="Matthews N.S.W."/>
            <person name="McLaren S."/>
            <person name="Milne S."/>
            <person name="Mistry S."/>
            <person name="Moore M.J.F."/>
            <person name="Nickerson T."/>
            <person name="O'Dell C.N."/>
            <person name="Oliver K."/>
            <person name="Palmeiri A."/>
            <person name="Palmer S.A."/>
            <person name="Parker A."/>
            <person name="Patel D."/>
            <person name="Pearce A.V."/>
            <person name="Peck A.I."/>
            <person name="Pelan S."/>
            <person name="Phelps K."/>
            <person name="Phillimore B.J."/>
            <person name="Plumb R."/>
            <person name="Rajan J."/>
            <person name="Raymond C."/>
            <person name="Rouse G."/>
            <person name="Saenphimmachak C."/>
            <person name="Sehra H.K."/>
            <person name="Sheridan E."/>
            <person name="Shownkeen R."/>
            <person name="Sims S."/>
            <person name="Skuce C.D."/>
            <person name="Smith M."/>
            <person name="Steward C."/>
            <person name="Subramanian S."/>
            <person name="Sycamore N."/>
            <person name="Tracey A."/>
            <person name="Tromans A."/>
            <person name="Van Helmond Z."/>
            <person name="Wall M."/>
            <person name="Wallis J.M."/>
            <person name="White S."/>
            <person name="Whitehead S.L."/>
            <person name="Wilkinson J.E."/>
            <person name="Willey D.L."/>
            <person name="Williams H."/>
            <person name="Wilming L."/>
            <person name="Wray P.W."/>
            <person name="Wu Z."/>
            <person name="Coulson A."/>
            <person name="Vaudin M."/>
            <person name="Sulston J.E."/>
            <person name="Durbin R.M."/>
            <person name="Hubbard T."/>
            <person name="Wooster R."/>
            <person name="Dunham I."/>
            <person name="Carter N.P."/>
            <person name="McVean G."/>
            <person name="Ross M.T."/>
            <person name="Harrow J."/>
            <person name="Olson M.V."/>
            <person name="Beck S."/>
            <person name="Rogers J."/>
            <person name="Bentley D.R."/>
        </authorList>
    </citation>
    <scope>NUCLEOTIDE SEQUENCE [LARGE SCALE GENOMIC DNA]</scope>
</reference>
<reference key="11">
    <citation type="submission" date="2005-07" db="EMBL/GenBank/DDBJ databases">
        <authorList>
            <person name="Mural R.J."/>
            <person name="Istrail S."/>
            <person name="Sutton G.G."/>
            <person name="Florea L."/>
            <person name="Halpern A.L."/>
            <person name="Mobarry C.M."/>
            <person name="Lippert R."/>
            <person name="Walenz B."/>
            <person name="Shatkay H."/>
            <person name="Dew I."/>
            <person name="Miller J.R."/>
            <person name="Flanigan M.J."/>
            <person name="Edwards N.J."/>
            <person name="Bolanos R."/>
            <person name="Fasulo D."/>
            <person name="Halldorsson B.V."/>
            <person name="Hannenhalli S."/>
            <person name="Turner R."/>
            <person name="Yooseph S."/>
            <person name="Lu F."/>
            <person name="Nusskern D.R."/>
            <person name="Shue B.C."/>
            <person name="Zheng X.H."/>
            <person name="Zhong F."/>
            <person name="Delcher A.L."/>
            <person name="Huson D.H."/>
            <person name="Kravitz S.A."/>
            <person name="Mouchard L."/>
            <person name="Reinert K."/>
            <person name="Remington K.A."/>
            <person name="Clark A.G."/>
            <person name="Waterman M.S."/>
            <person name="Eichler E.E."/>
            <person name="Adams M.D."/>
            <person name="Hunkapiller M.W."/>
            <person name="Myers E.W."/>
            <person name="Venter J.C."/>
        </authorList>
    </citation>
    <scope>NUCLEOTIDE SEQUENCE [LARGE SCALE GENOMIC DNA]</scope>
</reference>
<reference key="12">
    <citation type="journal article" date="2004" name="Genome Res.">
        <title>The status, quality, and expansion of the NIH full-length cDNA project: the Mammalian Gene Collection (MGC).</title>
        <authorList>
            <consortium name="The MGC Project Team"/>
        </authorList>
    </citation>
    <scope>NUCLEOTIDE SEQUENCE [LARGE SCALE MRNA] (ISOFORM 1)</scope>
    <source>
        <tissue>Colon</tissue>
    </source>
</reference>
<reference key="13">
    <citation type="journal article" date="2000" name="EMBO J.">
        <title>The spliceosome deposits multiple proteins 20-24 nucleotides upstream of mRNA exon-exon junctions.</title>
        <authorList>
            <person name="Le Hir H."/>
            <person name="Izaurralde E."/>
            <person name="Maquat L.E."/>
            <person name="Moore M.J."/>
        </authorList>
    </citation>
    <scope>IDENTIFICATION IN A MRNA SPLICING-DEPENDENT EXON JUNCTION COMPLEX (EJC) WITH DEK; RNPS1; SRRM1 AND ALYREF/THOC4</scope>
</reference>
<reference key="14">
    <citation type="journal article" date="2001" name="EMBO J.">
        <title>Importin 13: a novel mediator of nuclear import and export.</title>
        <authorList>
            <person name="Mingot J.-M."/>
            <person name="Kostka S."/>
            <person name="Kraft R."/>
            <person name="Hartmann E."/>
            <person name="Goerlich D."/>
        </authorList>
    </citation>
    <scope>INTERACTION WITH IPO13</scope>
</reference>
<reference key="15">
    <citation type="journal article" date="2001" name="EMBO J.">
        <title>Magoh, a human homolog of Drosophila mago nashi protein, is a component of the splicing-dependent exon-exon junction complex.</title>
        <authorList>
            <person name="Kataoka N."/>
            <person name="Diem M.D."/>
            <person name="Kim V.N."/>
            <person name="Yong J."/>
            <person name="Dreyfuss G."/>
        </authorList>
    </citation>
    <scope>INTERACTION WITH ALYREF/THOC4 AND THE EXON JUNCTION COMPLEX</scope>
</reference>
<reference key="16">
    <citation type="journal article" date="2001" name="Science">
        <title>Role of the nonsense-mediated decay factor hUpf3 in the splicing-dependent exon-exon junction complex.</title>
        <authorList>
            <person name="Kim V.N."/>
            <person name="Kataoka N."/>
            <person name="Dreyfuss G."/>
        </authorList>
    </citation>
    <scope>IDENTIFICATION IN A MRNP COMPLEX WITH UPF3A AND UPF3B</scope>
</reference>
<reference key="17">
    <citation type="journal article" date="2001" name="Science">
        <title>Communication of the position of exon-exon junctions to the mRNA surveillance machinery by the protein RNPS1.</title>
        <authorList>
            <person name="Lykke-Andersen J."/>
            <person name="Shu M.-D."/>
            <person name="Steitz J.A."/>
        </authorList>
    </citation>
    <scope>IDENTIFICATION IN A POST-SPLICING COMPLEX WITH NXF1; UPF1; UPF2; UPF3A; UPF3B AND RNPS1</scope>
</reference>
<reference key="18">
    <citation type="journal article" date="2002" name="Curr. Biol.">
        <title>Translation is required to remove Y14 from mRNAs in the cytoplasm.</title>
        <authorList>
            <person name="Dostie J."/>
            <person name="Dreyfuss G."/>
        </authorList>
    </citation>
    <scope>FUNCTION IN TRANSLATION</scope>
    <scope>ASSOCIATION WITH POLYSOMES</scope>
    <scope>RNA-BINDING</scope>
</reference>
<reference key="19">
    <citation type="journal article" date="2002" name="RNA">
        <title>Purification and characterization of native spliceosomes suitable for three-dimensional structural analysis.</title>
        <authorList>
            <person name="Jurica M.S."/>
            <person name="Licklider L.J."/>
            <person name="Gygi S.P."/>
            <person name="Grigorieff N."/>
            <person name="Moore M.J."/>
        </authorList>
    </citation>
    <scope>IDENTIFICATION BY MASS SPECTROMETRY</scope>
    <scope>IDENTIFICATION IN THE SPLICEOSOMAL C COMPLEX</scope>
</reference>
<reference key="20">
    <citation type="journal article" date="2003" name="J. Biol. Chem.">
        <title>An evolutionarily conserved role for SRm160 in 3'-end processing that functions independently of exon junction complex formation.</title>
        <authorList>
            <person name="McCracken S."/>
            <person name="Longman D."/>
            <person name="Johnstone I.L."/>
            <person name="Caceres J.F."/>
            <person name="Blencowe B.J."/>
        </authorList>
    </citation>
    <scope>INTERACTION WITH DDX39B; RNPS1; SRRM1 AND ALYREF/THOC4</scope>
</reference>
<reference key="21">
    <citation type="journal article" date="2003" name="Mol. Cell">
        <title>Y14 and hUpf3b form an NMD-activating complex.</title>
        <authorList>
            <person name="Gehring N.H."/>
            <person name="Neu-Yilik G."/>
            <person name="Schell T."/>
            <person name="Hentze M.W."/>
            <person name="Kulozik A.E."/>
        </authorList>
    </citation>
    <scope>FUNCTION IN NONSENSE-MEDIATED MRNA DECAY</scope>
    <scope>INTERACTION WITH UPF3B</scope>
</reference>
<reference key="22">
    <citation type="journal article" date="2003" name="Nat. Struct. Biol.">
        <title>A novel mode of RBD-protein recognition in the Y14-Mago complex.</title>
        <authorList>
            <person name="Fribourg S."/>
            <person name="Gatfield D."/>
            <person name="Izaurralde E."/>
            <person name="Conti E."/>
        </authorList>
    </citation>
    <scope>FUNCTION</scope>
    <scope>INTERACTION WITH MAGOH</scope>
</reference>
<reference key="23">
    <citation type="journal article" date="2004" name="EMBO Rep.">
        <title>Molecular insights into the interaction of PYM with the Mago-Y14 core of the exon junction complex.</title>
        <authorList>
            <person name="Bono F."/>
            <person name="Ebert J."/>
            <person name="Unterholzner L."/>
            <person name="Guettler T."/>
            <person name="Izaurralde E."/>
            <person name="Conti E."/>
        </authorList>
    </citation>
    <scope>INTERACTION WITH PYM1</scope>
</reference>
<reference key="24">
    <citation type="journal article" date="2004" name="J. Biol. Chem.">
        <title>A simple whole cell lysate system for in vitro splicing reveals a stepwise assembly of the exon-exon junction complex.</title>
        <authorList>
            <person name="Kataoka N."/>
            <person name="Dreyfuss G."/>
        </authorList>
    </citation>
    <scope>IDENTIFICATION IN A MRNA SPLICING-DEPENDENT EXON JUNCTION COMPLEX (EJC) WITH RNPS1 AND SRRM1</scope>
</reference>
<reference key="25">
    <citation type="journal article" date="2005" name="Mol. Cell">
        <title>Exon-junction complex components specify distinct routes of nonsense-mediated mRNA decay with differential cofactor requirements.</title>
        <authorList>
            <person name="Gehring N.H."/>
            <person name="Kunz J.B."/>
            <person name="Neu-Yilik G."/>
            <person name="Breit S."/>
            <person name="Viegas M.H."/>
            <person name="Hentze M.W."/>
            <person name="Kulozik A.E."/>
        </authorList>
    </citation>
    <scope>FUNCTION</scope>
    <scope>MUTAGENESIS OF 82-GLU-GLU-83; 106-LEU--ARG-108; LEU-118 AND 149-CYS-PHE-150</scope>
</reference>
<reference key="26">
    <citation type="journal article" date="2005" name="Nat. Struct. Mol. Biol.">
        <title>The exon junction core complex is locked onto RNA by inhibition of eIF4AIII ATPase activity.</title>
        <authorList>
            <person name="Ballut L."/>
            <person name="Marchadier B."/>
            <person name="Baguet A."/>
            <person name="Tomasetto C."/>
            <person name="Seraphin B."/>
            <person name="Le Hir H."/>
        </authorList>
    </citation>
    <scope>IDENTIFICATION IN THE CORE EXON JUNCTION COMPLEX</scope>
</reference>
<reference key="27">
    <citation type="journal article" date="2005" name="RNA">
        <title>Biochemical analysis of the EJC reveals two new factors and a stable tetrameric protein core.</title>
        <authorList>
            <person name="Tange T.O."/>
            <person name="Shibuya T."/>
            <person name="Jurica M.S."/>
            <person name="Moore M.J."/>
        </authorList>
    </citation>
    <scope>IDENTIFICATION IN THE CORE EXON JUNCTION COMPLEX</scope>
    <scope>IDENTIFICATION IN A MRNA SPLICING-DEPENDENT EXON JUNCTION COMPLEX</scope>
    <scope>IDENTIFICATION BY MASS SPECTROMETRY</scope>
</reference>
<reference key="28">
    <citation type="journal article" date="2006" name="Cell">
        <title>Global, in vivo, and site-specific phosphorylation dynamics in signaling networks.</title>
        <authorList>
            <person name="Olsen J.V."/>
            <person name="Blagoev B."/>
            <person name="Gnad F."/>
            <person name="Macek B."/>
            <person name="Kumar C."/>
            <person name="Mortensen P."/>
            <person name="Mann M."/>
        </authorList>
    </citation>
    <scope>PHOSPHORYLATION [LARGE SCALE ANALYSIS] AT SER-42</scope>
    <scope>IDENTIFICATION BY MASS SPECTROMETRY [LARGE SCALE ANALYSIS]</scope>
    <source>
        <tissue>Cervix carcinoma</tissue>
    </source>
</reference>
<reference key="29">
    <citation type="journal article" date="2007" name="Nat. Struct. Mol. Biol.">
        <title>PYM binds the cytoplasmic exon-junction complex and ribosomes to enhance translation of spliced mRNAs.</title>
        <authorList>
            <person name="Diem M.D."/>
            <person name="Chan C.C."/>
            <person name="Younis I."/>
            <person name="Dreyfuss G."/>
        </authorList>
    </citation>
    <scope>INTERACTION WITH PYM1</scope>
</reference>
<reference key="30">
    <citation type="journal article" date="2008" name="Proc. Natl. Acad. Sci. U.S.A.">
        <title>A quantitative atlas of mitotic phosphorylation.</title>
        <authorList>
            <person name="Dephoure N."/>
            <person name="Zhou C."/>
            <person name="Villen J."/>
            <person name="Beausoleil S.A."/>
            <person name="Bakalarski C.E."/>
            <person name="Elledge S.J."/>
            <person name="Gygi S.P."/>
        </authorList>
    </citation>
    <scope>PHOSPHORYLATION [LARGE SCALE ANALYSIS] AT SER-42 AND SER-56</scope>
    <scope>IDENTIFICATION BY MASS SPECTROMETRY [LARGE SCALE ANALYSIS]</scope>
    <source>
        <tissue>Cervix carcinoma</tissue>
    </source>
</reference>
<reference key="31">
    <citation type="journal article" date="2009" name="Anal. Chem.">
        <title>Lys-N and trypsin cover complementary parts of the phosphoproteome in a refined SCX-based approach.</title>
        <authorList>
            <person name="Gauci S."/>
            <person name="Helbig A.O."/>
            <person name="Slijper M."/>
            <person name="Krijgsveld J."/>
            <person name="Heck A.J."/>
            <person name="Mohammed S."/>
        </authorList>
    </citation>
    <scope>ACETYLATION [LARGE SCALE ANALYSIS] AT ALA-2</scope>
    <scope>CLEAVAGE OF INITIATOR METHIONINE [LARGE SCALE ANALYSIS]</scope>
    <scope>IDENTIFICATION BY MASS SPECTROMETRY [LARGE SCALE ANALYSIS]</scope>
</reference>
<reference key="32">
    <citation type="journal article" date="2009" name="Biochem. Biophys. Res. Commun.">
        <title>Exon junction complex enhances translation of spliced mRNAs at multiple steps.</title>
        <authorList>
            <person name="Lee H.C."/>
            <person name="Choe J."/>
            <person name="Chi S.G."/>
            <person name="Kim Y.K."/>
        </authorList>
    </citation>
    <scope>FUNCTION IN MRNA TRANSLATION</scope>
</reference>
<reference key="33">
    <citation type="journal article" date="2009" name="Cell">
        <title>Disassembly of exon junction complexes by PYM.</title>
        <authorList>
            <person name="Gehring N.H."/>
            <person name="Lamprinaki S."/>
            <person name="Kulozik A.E."/>
            <person name="Hentze M.W."/>
        </authorList>
    </citation>
    <scope>INTERACTION WITH PYM1</scope>
</reference>
<reference key="34">
    <citation type="journal article" date="2009" name="RNA">
        <title>Assembly and mobility of exon-exon junction complexes in living cells.</title>
        <authorList>
            <person name="Schmidt U."/>
            <person name="Im K.-B."/>
            <person name="Benzing C."/>
            <person name="Janjetovic S."/>
            <person name="Rippe K."/>
            <person name="Lichter P."/>
            <person name="Wachsmuth M."/>
        </authorList>
    </citation>
    <scope>SUBCELLULAR LOCATION</scope>
</reference>
<reference key="35">
    <citation type="journal article" date="2009" name="Sci. Signal.">
        <title>Quantitative phosphoproteomic analysis of T cell receptor signaling reveals system-wide modulation of protein-protein interactions.</title>
        <authorList>
            <person name="Mayya V."/>
            <person name="Lundgren D.H."/>
            <person name="Hwang S.-I."/>
            <person name="Rezaul K."/>
            <person name="Wu L."/>
            <person name="Eng J.K."/>
            <person name="Rodionov V."/>
            <person name="Han D.K."/>
        </authorList>
    </citation>
    <scope>PHOSPHORYLATION [LARGE SCALE ANALYSIS] AT SER-56</scope>
    <scope>IDENTIFICATION BY MASS SPECTROMETRY [LARGE SCALE ANALYSIS]</scope>
    <source>
        <tissue>Leukemic T-cell</tissue>
    </source>
</reference>
<reference key="36">
    <citation type="journal article" date="2010" name="Sci. Signal.">
        <title>Quantitative phosphoproteomics reveals widespread full phosphorylation site occupancy during mitosis.</title>
        <authorList>
            <person name="Olsen J.V."/>
            <person name="Vermeulen M."/>
            <person name="Santamaria A."/>
            <person name="Kumar C."/>
            <person name="Miller M.L."/>
            <person name="Jensen L.J."/>
            <person name="Gnad F."/>
            <person name="Cox J."/>
            <person name="Jensen T.S."/>
            <person name="Nigg E.A."/>
            <person name="Brunak S."/>
            <person name="Mann M."/>
        </authorList>
    </citation>
    <scope>ACETYLATION [LARGE SCALE ANALYSIS] AT ALA-2</scope>
    <scope>PHOSPHORYLATION [LARGE SCALE ANALYSIS] AT SER-24 AND SER-42</scope>
    <scope>CLEAVAGE OF INITIATOR METHIONINE [LARGE SCALE ANALYSIS]</scope>
    <scope>IDENTIFICATION BY MASS SPECTROMETRY [LARGE SCALE ANALYSIS]</scope>
    <source>
        <tissue>Cervix carcinoma</tissue>
    </source>
</reference>
<reference key="37">
    <citation type="journal article" date="2011" name="BMC Syst. Biol.">
        <title>Initial characterization of the human central proteome.</title>
        <authorList>
            <person name="Burkard T.R."/>
            <person name="Planyavsky M."/>
            <person name="Kaupe I."/>
            <person name="Breitwieser F.P."/>
            <person name="Buerckstuemmer T."/>
            <person name="Bennett K.L."/>
            <person name="Superti-Furga G."/>
            <person name="Colinge J."/>
        </authorList>
    </citation>
    <scope>IDENTIFICATION BY MASS SPECTROMETRY [LARGE SCALE ANALYSIS]</scope>
</reference>
<reference key="38">
    <citation type="journal article" date="2011" name="Sci. Signal.">
        <title>System-wide temporal characterization of the proteome and phosphoproteome of human embryonic stem cell differentiation.</title>
        <authorList>
            <person name="Rigbolt K.T."/>
            <person name="Prokhorova T.A."/>
            <person name="Akimov V."/>
            <person name="Henningsen J."/>
            <person name="Johansen P.T."/>
            <person name="Kratchmarova I."/>
            <person name="Kassem M."/>
            <person name="Mann M."/>
            <person name="Olsen J.V."/>
            <person name="Blagoev B."/>
        </authorList>
    </citation>
    <scope>ACETYLATION [LARGE SCALE ANALYSIS] AT ALA-2</scope>
    <scope>PHOSPHORYLATION [LARGE SCALE ANALYSIS] AT SER-24; SER-42 AND SER-56</scope>
    <scope>CLEAVAGE OF INITIATOR METHIONINE [LARGE SCALE ANALYSIS]</scope>
    <scope>IDENTIFICATION BY MASS SPECTROMETRY [LARGE SCALE ANALYSIS]</scope>
</reference>
<reference key="39">
    <citation type="journal article" date="2012" name="Mol. Cell. Biol.">
        <title>Proteins associated with the exon junction complex also control the alternative splicing of apoptotic regulators.</title>
        <authorList>
            <person name="Michelle L."/>
            <person name="Cloutier A."/>
            <person name="Toutant J."/>
            <person name="Shkreta L."/>
            <person name="Thibault P."/>
            <person name="Durand M."/>
            <person name="Garneau D."/>
            <person name="Gendron D."/>
            <person name="Lapointe E."/>
            <person name="Couture S."/>
            <person name="Le Hir H."/>
            <person name="Klinck R."/>
            <person name="Elela S.A."/>
            <person name="Prinos P."/>
            <person name="Chabot B."/>
        </authorList>
    </citation>
    <scope>FUNCTION</scope>
</reference>
<reference key="40">
    <citation type="journal article" date="2012" name="Nat. Genet.">
        <title>Compound inheritance of a low-frequency regulatory SNP and a rare null mutation in exon-junction complex subunit RBM8A causes TAR syndrome.</title>
        <authorList>
            <person name="Albers C.A."/>
            <person name="Paul D.S."/>
            <person name="Schulze H."/>
            <person name="Freson K."/>
            <person name="Stephens J.C."/>
            <person name="Smethurst P.A."/>
            <person name="Jolley J.D."/>
            <person name="Cvejic A."/>
            <person name="Kostadima M."/>
            <person name="Bertone P."/>
            <person name="Breuning M.H."/>
            <person name="Debili N."/>
            <person name="Deloukas P."/>
            <person name="Favier R."/>
            <person name="Fiedler J."/>
            <person name="Hobbs C.M."/>
            <person name="Huang N."/>
            <person name="Hurles M.E."/>
            <person name="Kiddle G."/>
            <person name="Krapels I."/>
            <person name="Nurden P."/>
            <person name="Ruivenkamp C.A."/>
            <person name="Sambrook J.G."/>
            <person name="Smith K."/>
            <person name="Stemple D.L."/>
            <person name="Strauss G."/>
            <person name="Thys C."/>
            <person name="van Geet C."/>
            <person name="Newbury-Ecob R."/>
            <person name="Ouwehand W.H."/>
            <person name="Ghevaert C."/>
        </authorList>
    </citation>
    <scope>INVOLVEMENT IN TAR</scope>
</reference>
<reference key="41">
    <citation type="journal article" date="2013" name="J. Proteome Res.">
        <title>Toward a comprehensive characterization of a human cancer cell phosphoproteome.</title>
        <authorList>
            <person name="Zhou H."/>
            <person name="Di Palma S."/>
            <person name="Preisinger C."/>
            <person name="Peng M."/>
            <person name="Polat A.N."/>
            <person name="Heck A.J."/>
            <person name="Mohammed S."/>
        </authorList>
    </citation>
    <scope>PHOSPHORYLATION [LARGE SCALE ANALYSIS] AT SER-24; SER-42 AND SER-56</scope>
    <scope>IDENTIFICATION BY MASS SPECTROMETRY [LARGE SCALE ANALYSIS]</scope>
    <source>
        <tissue>Cervix carcinoma</tissue>
        <tissue>Erythroleukemia</tissue>
    </source>
</reference>
<reference key="42">
    <citation type="journal article" date="2013" name="RNA Biol.">
        <title>Two mammalian MAGOH genes contribute to exon junction complex composition and nonsense-mediated decay.</title>
        <authorList>
            <person name="Singh K.K."/>
            <person name="Wachsmuth L."/>
            <person name="Kulozik A.E."/>
            <person name="Gehring N.H."/>
        </authorList>
    </citation>
    <scope>INTERACTION WITH MAGOHB AND MAGOH</scope>
    <scope>IDENTIFICATION IN THE EXON JUNCTION COMPLEX</scope>
</reference>
<reference key="43">
    <citation type="journal article" date="2014" name="J. Proteomics">
        <title>An enzyme assisted RP-RPLC approach for in-depth analysis of human liver phosphoproteome.</title>
        <authorList>
            <person name="Bian Y."/>
            <person name="Song C."/>
            <person name="Cheng K."/>
            <person name="Dong M."/>
            <person name="Wang F."/>
            <person name="Huang J."/>
            <person name="Sun D."/>
            <person name="Wang L."/>
            <person name="Ye M."/>
            <person name="Zou H."/>
        </authorList>
    </citation>
    <scope>IDENTIFICATION BY MASS SPECTROMETRY [LARGE SCALE ANALYSIS]</scope>
    <source>
        <tissue>Liver</tissue>
    </source>
</reference>
<reference key="44">
    <citation type="journal article" date="2014" name="Nat. Struct. Mol. Biol.">
        <title>Uncovering global SUMOylation signaling networks in a site-specific manner.</title>
        <authorList>
            <person name="Hendriks I.A."/>
            <person name="D'Souza R.C."/>
            <person name="Yang B."/>
            <person name="Verlaan-de Vries M."/>
            <person name="Mann M."/>
            <person name="Vertegaal A.C."/>
        </authorList>
    </citation>
    <scope>SUMOYLATION [LARGE SCALE ANALYSIS] AT LYS-27</scope>
    <scope>IDENTIFICATION BY MASS SPECTROMETRY [LARGE SCALE ANALYSIS]</scope>
</reference>
<reference key="45">
    <citation type="journal article" date="2017" name="Nat. Struct. Mol. Biol.">
        <title>Site-specific mapping of the human SUMO proteome reveals co-modification with phosphorylation.</title>
        <authorList>
            <person name="Hendriks I.A."/>
            <person name="Lyon D."/>
            <person name="Young C."/>
            <person name="Jensen L.J."/>
            <person name="Vertegaal A.C."/>
            <person name="Nielsen M.L."/>
        </authorList>
    </citation>
    <scope>SUMOYLATION [LARGE SCALE ANALYSIS] AT LYS-27</scope>
    <scope>IDENTIFICATION BY MASS SPECTROMETRY [LARGE SCALE ANALYSIS]</scope>
</reference>
<reference evidence="39" key="46">
    <citation type="journal article" date="2003" name="Curr. Biol.">
        <title>Structure of the Y14-Magoh core of the exon junction complex.</title>
        <authorList>
            <person name="Lau C.K."/>
            <person name="Diem M.D."/>
            <person name="Dreyfuss G."/>
            <person name="Van Duyne G.D."/>
        </authorList>
    </citation>
    <scope>X-RAY CRYSTALLOGRAPHY (2.0 ANGSTROMS) OF 50-155 IN COMPLEX WITH MAGOH</scope>
</reference>
<reference evidence="41 42" key="47">
    <citation type="journal article" date="2006" name="Cell">
        <title>The crystal structure of the exon junction complex reveals how it maintains a stable grip on mRNA.</title>
        <authorList>
            <person name="Bono F."/>
            <person name="Ebert J."/>
            <person name="Lorentzen E."/>
            <person name="Conti E."/>
        </authorList>
    </citation>
    <scope>X-RAY CRYSTALLOGRAPHY (2.21 ANGSTROMS) OF 66-154 IN THE EJC COMPLEX WITH CASC3; EIF4A3; MAGOH AND AMP-PNP</scope>
</reference>
<reference evidence="40" key="48">
    <citation type="journal article" date="2006" name="Science">
        <title>Structure of the exon junction core complex with a trapped DEAD-box ATPase bound to RNA.</title>
        <authorList>
            <person name="Andersen C.B."/>
            <person name="Ballut L."/>
            <person name="Johansen J.S."/>
            <person name="Chamieh H."/>
            <person name="Nielsen K.H."/>
            <person name="Oliveira C.L."/>
            <person name="Pedersen J.S."/>
            <person name="Seraphin B."/>
            <person name="Le Hir H."/>
            <person name="Andersen G.R."/>
        </authorList>
    </citation>
    <scope>X-RAY CRYSTALLOGRAPHY (2.3 ANGSTROMS) OF 64-154 IN THE EJC COMPLEX WITH CASC3; EIF4A3; MAGOH AND ADP-NP</scope>
</reference>
<reference evidence="44" key="49">
    <citation type="journal article" date="2009" name="RNA">
        <title>Mechanism of ATP turnover inhibition in the EJC.</title>
        <authorList>
            <person name="Nielsen K.H."/>
            <person name="Chamieh H."/>
            <person name="Andersen C.B."/>
            <person name="Fredslund F."/>
            <person name="Hamborg K."/>
            <person name="Le Hir H."/>
            <person name="Andersen G.R."/>
        </authorList>
    </citation>
    <scope>X-RAY CRYSTALLOGRAPHY (2.3 ANGSTROMS) OF 51-174 IN THE EJC COMPLEX WITH CASC3; EIF4A3; MAGOH AND TRANSITION STATE ANALOG ADP-ALF3</scope>
</reference>
<reference evidence="43" key="50">
    <citation type="journal article" date="2010" name="Proc. Natl. Acad. Sci. U.S.A.">
        <title>Insights into the recruitment of the NMD machinery from the crystal structure of a core EJC-UPF3b complex.</title>
        <authorList>
            <person name="Buchwald G."/>
            <person name="Ebert J."/>
            <person name="Basquin C."/>
            <person name="Sauliere J."/>
            <person name="Jayachandran U."/>
            <person name="Bono F."/>
            <person name="Le Hir H."/>
            <person name="Conti E."/>
        </authorList>
    </citation>
    <scope>X-RAY CRYSTALLOGRAPHY (3.40 ANGSTROMS) OF 66-155 IN THE EJC COMPLEX WITH CASC3; EIF4A3; MAGOH; UPF3B; UPF2 AND RNA</scope>
</reference>
<reference evidence="45" key="51">
    <citation type="journal article" date="2017" name="Cell">
        <title>An Atomic Structure of the Human Spliceosome.</title>
        <authorList>
            <person name="Zhang X."/>
            <person name="Yan C."/>
            <person name="Hang J."/>
            <person name="Finci L.I."/>
            <person name="Lei J."/>
            <person name="Shi Y."/>
        </authorList>
    </citation>
    <scope>STRUCTURE BY ELECTRON MICROSCOPY (3.60 ANGSTROMS)</scope>
    <scope>FUNCTION</scope>
    <scope>SUBCELLULAR LOCATION</scope>
    <scope>SUBUNIT</scope>
</reference>
<reference evidence="46" key="52">
    <citation type="journal article" date="2018" name="Science">
        <title>Structure of a human catalytic step I spliceosome.</title>
        <authorList>
            <person name="Zhan X."/>
            <person name="Yan C."/>
            <person name="Zhang X."/>
            <person name="Lei J."/>
            <person name="Shi Y."/>
        </authorList>
    </citation>
    <scope>STRUCTURE BY ELECTRON MICROSCOPY (4.10 ANGSTROMS)</scope>
    <scope>FUNCTION</scope>
    <scope>SUBCELLULAR LOCATION</scope>
    <scope>SUBUNIT</scope>
</reference>
<reference evidence="47" key="53">
    <citation type="journal article" date="2023" name="Nature">
        <title>mRNA recognition and packaging by the human transcription-export complex.</title>
        <authorList>
            <person name="Pacheco-Fiallos B."/>
            <person name="Vorlander M.K."/>
            <person name="Riabov-Bassat D."/>
            <person name="Fin L."/>
            <person name="O'Reilly F.J."/>
            <person name="Ayala F.I."/>
            <person name="Schellhaas U."/>
            <person name="Rappsilber J."/>
            <person name="Plaschka C."/>
        </authorList>
    </citation>
    <scope>STRUCTURE BY ELECTRON MICROSCOPY (2.40 ANGSTROMS) OF 65-155 IN COMPLEX WITH THOC4; EIF4A3 AND MAGOH</scope>
    <scope>SUBUNIT</scope>
</reference>
<protein>
    <recommendedName>
        <fullName>RNA-binding protein 8A</fullName>
    </recommendedName>
    <alternativeName>
        <fullName>Binder of OVCA1-1</fullName>
        <shortName>BOV-1</shortName>
    </alternativeName>
    <alternativeName>
        <fullName>RNA-binding motif protein 8A</fullName>
    </alternativeName>
    <alternativeName>
        <fullName evidence="37">RNA-binding protein Y14</fullName>
    </alternativeName>
    <alternativeName>
        <fullName>Ribonucleoprotein RBM8A</fullName>
    </alternativeName>
</protein>
<sequence>MADVLDLHEAGGEDFAMDEDGDESIHKLKEKAKKRKGRGFGSEEGSRARMREDYDSVEQDGDEPGPQRSVEGWILFVTGVHEEATEEDIHDKFAEYGEIKNIHLNLDRRTGYLKGYTLVEYETYKEAQAAMEGLNGQDLMGQPISVDWCFVRGPPKGKRRGGRRRSRSPDRRRR</sequence>